<gene>
    <name type="primary">mtmr12</name>
    <name type="ORF">si:dkey-207e22.3</name>
</gene>
<sequence>MLSLGSGGAKSSKPSFVSYVTPEEIKLEKDPQKKEKHPDLLPGEVVFCSANPILKYTQDDLSQRGVFGTLLCTNFRVAFISDDAPQEEMSKTFKNKLYGENDIPLMCVDHIYGVYDEKRKLITGGLVKNKCPSKMIIHCKDLRVFQFCLTFSKEEDAKRIFQGIAHHCLEEKSLKCVFAFSYLRSTNPEMLRKREAIMFDSPEDWTQEMKRTKAQCRLVTENENFELSQRLPQYFVIPSALGDLFNYQGKGLPIWCWSHHSGCALFKASFPSMTQEDGDFQSHLDTMITAVARNYLYSVKTEDLSESLPTLQDIQQSYNKFKQYFLIDNTTDFWLSDVKWFSSLESSGWLDIIRQCLQKAVEVVECLEKDNTNVLITEEEGTDLCCVISSLAQIMLDPYYRTLMGFQSLVQKEWVAGCHAFLDRCNHLHQKDKECHSPVFLLFLECVWQLVQQHSPAFQFSETYLTVLSDSVHVPIFSTFLFNSAHHRESVMKAESPIAQSRPLSCPTVWDWSVQFDSKAQNFFFNPLYSEKVKHERTVRRPHKHKHQRQLSLPSSAFKTPTKKGFFKDETDSLKKMLRVKRISRWMGSPDSPVVASREFYESWQQRPLDYHGLLLPSLDGPSVRIWMQRYLRWIPEVHIMGGGSVAIMTKLMELLSQVEDLKRVLEQRDPSLATQPDHPPPLHHRLPSFGSSGRLSSSFPFTYSRNRSFKPIIPTGLMQSLMVADNLANQEDETS</sequence>
<dbReference type="EMBL" id="BX470118">
    <property type="protein sequence ID" value="CAM15354.1"/>
    <property type="molecule type" value="Genomic_DNA"/>
</dbReference>
<dbReference type="RefSeq" id="NP_001107085.1">
    <property type="nucleotide sequence ID" value="NM_001113613.1"/>
</dbReference>
<dbReference type="SMR" id="A2BGG1"/>
<dbReference type="FunCoup" id="A2BGG1">
    <property type="interactions" value="945"/>
</dbReference>
<dbReference type="STRING" id="7955.ENSDARP00000077996"/>
<dbReference type="PaxDb" id="7955-ENSDARP00000077996"/>
<dbReference type="PeptideAtlas" id="A2BGG1"/>
<dbReference type="Ensembl" id="ENSDART00000083561">
    <property type="protein sequence ID" value="ENSDARP00000077996"/>
    <property type="gene ID" value="ENSDARG00000059817"/>
</dbReference>
<dbReference type="GeneID" id="569130"/>
<dbReference type="KEGG" id="dre:569130"/>
<dbReference type="AGR" id="ZFIN:ZDB-GENE-050401-1"/>
<dbReference type="CTD" id="54545"/>
<dbReference type="ZFIN" id="ZDB-GENE-050401-1">
    <property type="gene designation" value="mtmr12"/>
</dbReference>
<dbReference type="eggNOG" id="KOG1089">
    <property type="taxonomic scope" value="Eukaryota"/>
</dbReference>
<dbReference type="HOGENOM" id="CLU_021912_1_0_1"/>
<dbReference type="InParanoid" id="A2BGG1"/>
<dbReference type="OMA" id="DVLRFQG"/>
<dbReference type="OrthoDB" id="271628at2759"/>
<dbReference type="PhylomeDB" id="A2BGG1"/>
<dbReference type="TreeFam" id="TF315197"/>
<dbReference type="Reactome" id="R-DRE-1660516">
    <property type="pathway name" value="Synthesis of PIPs at the early endosome membrane"/>
</dbReference>
<dbReference type="PRO" id="PR:A2BGG1"/>
<dbReference type="Proteomes" id="UP000000437">
    <property type="component" value="Alternate scaffold 5"/>
</dbReference>
<dbReference type="Proteomes" id="UP000000437">
    <property type="component" value="Chromosome 5"/>
</dbReference>
<dbReference type="Bgee" id="ENSDARG00000059817">
    <property type="expression patterns" value="Expressed in intestine and 19 other cell types or tissues"/>
</dbReference>
<dbReference type="GO" id="GO:0005737">
    <property type="term" value="C:cytoplasm"/>
    <property type="evidence" value="ECO:0000318"/>
    <property type="project" value="GO_Central"/>
</dbReference>
<dbReference type="GO" id="GO:0016020">
    <property type="term" value="C:membrane"/>
    <property type="evidence" value="ECO:0000318"/>
    <property type="project" value="GO_Central"/>
</dbReference>
<dbReference type="GO" id="GO:0030017">
    <property type="term" value="C:sarcomere"/>
    <property type="evidence" value="ECO:0007669"/>
    <property type="project" value="UniProtKB-SubCell"/>
</dbReference>
<dbReference type="GO" id="GO:0016529">
    <property type="term" value="C:sarcoplasmic reticulum"/>
    <property type="evidence" value="ECO:0007669"/>
    <property type="project" value="UniProtKB-SubCell"/>
</dbReference>
<dbReference type="GO" id="GO:0004438">
    <property type="term" value="F:phosphatidylinositol-3-phosphate phosphatase activity"/>
    <property type="evidence" value="ECO:0000318"/>
    <property type="project" value="GO_Central"/>
</dbReference>
<dbReference type="GO" id="GO:0007626">
    <property type="term" value="P:locomotory behavior"/>
    <property type="evidence" value="ECO:0000315"/>
    <property type="project" value="ZFIN"/>
</dbReference>
<dbReference type="GO" id="GO:0046856">
    <property type="term" value="P:phosphatidylinositol dephosphorylation"/>
    <property type="evidence" value="ECO:0000318"/>
    <property type="project" value="GO_Central"/>
</dbReference>
<dbReference type="GO" id="GO:0048741">
    <property type="term" value="P:skeletal muscle fiber development"/>
    <property type="evidence" value="ECO:0000315"/>
    <property type="project" value="ZFIN"/>
</dbReference>
<dbReference type="CDD" id="cd13348">
    <property type="entry name" value="PH-GRAM_MTMR12"/>
    <property type="match status" value="1"/>
</dbReference>
<dbReference type="FunFam" id="2.30.29.30:FF:000188">
    <property type="entry name" value="Myotubularin related protein 12"/>
    <property type="match status" value="1"/>
</dbReference>
<dbReference type="Gene3D" id="2.30.29.30">
    <property type="entry name" value="Pleckstrin-homology domain (PH domain)/Phosphotyrosine-binding domain (PTB)"/>
    <property type="match status" value="1"/>
</dbReference>
<dbReference type="InterPro" id="IPR022587">
    <property type="entry name" value="MTMR12-like_C"/>
</dbReference>
<dbReference type="InterPro" id="IPR030564">
    <property type="entry name" value="Myotubularin"/>
</dbReference>
<dbReference type="InterPro" id="IPR010569">
    <property type="entry name" value="Myotubularin-like_Pase_dom"/>
</dbReference>
<dbReference type="InterPro" id="IPR011993">
    <property type="entry name" value="PH-like_dom_sf"/>
</dbReference>
<dbReference type="InterPro" id="IPR029021">
    <property type="entry name" value="Prot-tyrosine_phosphatase-like"/>
</dbReference>
<dbReference type="PANTHER" id="PTHR10807">
    <property type="entry name" value="MYOTUBULARIN-RELATED"/>
    <property type="match status" value="1"/>
</dbReference>
<dbReference type="PANTHER" id="PTHR10807:SF37">
    <property type="entry name" value="MYOTUBULARIN-RELATED PROTEIN 12"/>
    <property type="match status" value="1"/>
</dbReference>
<dbReference type="Pfam" id="PF12578">
    <property type="entry name" value="3-PAP"/>
    <property type="match status" value="1"/>
</dbReference>
<dbReference type="Pfam" id="PF06602">
    <property type="entry name" value="Myotub-related"/>
    <property type="match status" value="1"/>
</dbReference>
<dbReference type="SUPFAM" id="SSF52799">
    <property type="entry name" value="(Phosphotyrosine protein) phosphatases II"/>
    <property type="match status" value="1"/>
</dbReference>
<dbReference type="SUPFAM" id="SSF50729">
    <property type="entry name" value="PH domain-like"/>
    <property type="match status" value="1"/>
</dbReference>
<dbReference type="PROSITE" id="PS51339">
    <property type="entry name" value="PPASE_MYOTUBULARIN"/>
    <property type="match status" value="1"/>
</dbReference>
<name>MTMRC_DANRE</name>
<accession>A2BGG1</accession>
<organism>
    <name type="scientific">Danio rerio</name>
    <name type="common">Zebrafish</name>
    <name type="synonym">Brachydanio rerio</name>
    <dbReference type="NCBI Taxonomy" id="7955"/>
    <lineage>
        <taxon>Eukaryota</taxon>
        <taxon>Metazoa</taxon>
        <taxon>Chordata</taxon>
        <taxon>Craniata</taxon>
        <taxon>Vertebrata</taxon>
        <taxon>Euteleostomi</taxon>
        <taxon>Actinopterygii</taxon>
        <taxon>Neopterygii</taxon>
        <taxon>Teleostei</taxon>
        <taxon>Ostariophysi</taxon>
        <taxon>Cypriniformes</taxon>
        <taxon>Danionidae</taxon>
        <taxon>Danioninae</taxon>
        <taxon>Danio</taxon>
    </lineage>
</organism>
<keyword id="KW-0963">Cytoplasm</keyword>
<keyword id="KW-1185">Reference proteome</keyword>
<keyword id="KW-0703">Sarcoplasmic reticulum</keyword>
<proteinExistence type="evidence at protein level"/>
<evidence type="ECO:0000250" key="1">
    <source>
        <dbReference type="UniProtKB" id="Q80TA6"/>
    </source>
</evidence>
<evidence type="ECO:0000250" key="2">
    <source>
        <dbReference type="UniProtKB" id="Q9C0I1"/>
    </source>
</evidence>
<evidence type="ECO:0000255" key="3">
    <source>
        <dbReference type="PROSITE-ProRule" id="PRU00669"/>
    </source>
</evidence>
<evidence type="ECO:0000256" key="4">
    <source>
        <dbReference type="SAM" id="MobiDB-lite"/>
    </source>
</evidence>
<evidence type="ECO:0000269" key="5">
    <source>
    </source>
</evidence>
<evidence type="ECO:0000305" key="6"/>
<comment type="function">
    <text evidence="5">Acts as an adapter for the myotubularin phosphatase mtm1 to regulate mtm1 protein stability and possibly its intracellular location (PubMed:23818870). By stabilizing mtm1 protein levels, required for skeletal muscle maintenance but not for myogenesis (PubMed:23818870). In skeletal muscle cells, does not regulate mtm1 subcellular localization (PubMed:23818870).</text>
</comment>
<comment type="subunit">
    <text evidence="1 5">Heterodimer with lipid phosphatase mtm1 (By similarity). In skeletal muscles, the interaction stabilizes both mtmr12 and mtm1 protein levels (PubMed:23818870).</text>
</comment>
<comment type="subcellular location">
    <subcellularLocation>
        <location evidence="2">Cytoplasm</location>
    </subcellularLocation>
    <subcellularLocation>
        <location evidence="1">Sarcoplasmic reticulum</location>
    </subcellularLocation>
    <subcellularLocation>
        <location evidence="1">Cytoplasm</location>
        <location evidence="1">Myofibril</location>
        <location evidence="1">Sarcomere</location>
    </subcellularLocation>
</comment>
<comment type="developmental stage">
    <text evidence="5">At 1 day post fertilization (dpf), expressed ubiquitously in developing eyes, brain, heart and skeletal muscles. Maternally expressed up to 8 hour post fertilization and zygotic expression starts at 1 dpf and continues until 5 dpf.</text>
</comment>
<comment type="disruption phenotype">
    <text evidence="5">Morpholino knockdown results in early embryonic mortality between 3 to 5 days post fertilization. Causes a reduction in size with an abnormal dorsal curvature through the back and tail. Impaired motor function characterized by a delay in chorion hatching and a reduced motility. Some animals have pericardial edema. Defects in skeletal muscles including sarcomeric disorganization often with central nucleation and triad disorganization. In skeletal muscles, increased phosphatidylinositol 3-phosphate levels and severe reduction of mtm1 levels without affecting mtm1 subcellular localization. Double morpholino knockdown of mtmr12 and mtm1 results in a more severe phenotype.</text>
</comment>
<comment type="similarity">
    <text evidence="6">Belongs to the protein-tyrosine phosphatase family. Non-receptor class myotubularin subfamily.</text>
</comment>
<comment type="caution">
    <text evidence="1">Although it belongs to the non-receptor class myotubularin subfamily, lacks the conserved active site cysteine residue at position 378 in the dsPTPase catalytic loop and does not have phosphatase activity.</text>
</comment>
<feature type="chain" id="PRO_0000315829" description="Myotubularin-related protein 12">
    <location>
        <begin position="1"/>
        <end position="736"/>
    </location>
</feature>
<feature type="domain" description="Myotubularin phosphatase" evidence="3">
    <location>
        <begin position="182"/>
        <end position="558"/>
    </location>
</feature>
<feature type="region of interest" description="Disordered" evidence="4">
    <location>
        <begin position="672"/>
        <end position="691"/>
    </location>
</feature>
<reference key="1">
    <citation type="journal article" date="2013" name="Nature">
        <title>The zebrafish reference genome sequence and its relationship to the human genome.</title>
        <authorList>
            <person name="Howe K."/>
            <person name="Clark M.D."/>
            <person name="Torroja C.F."/>
            <person name="Torrance J."/>
            <person name="Berthelot C."/>
            <person name="Muffato M."/>
            <person name="Collins J.E."/>
            <person name="Humphray S."/>
            <person name="McLaren K."/>
            <person name="Matthews L."/>
            <person name="McLaren S."/>
            <person name="Sealy I."/>
            <person name="Caccamo M."/>
            <person name="Churcher C."/>
            <person name="Scott C."/>
            <person name="Barrett J.C."/>
            <person name="Koch R."/>
            <person name="Rauch G.J."/>
            <person name="White S."/>
            <person name="Chow W."/>
            <person name="Kilian B."/>
            <person name="Quintais L.T."/>
            <person name="Guerra-Assuncao J.A."/>
            <person name="Zhou Y."/>
            <person name="Gu Y."/>
            <person name="Yen J."/>
            <person name="Vogel J.H."/>
            <person name="Eyre T."/>
            <person name="Redmond S."/>
            <person name="Banerjee R."/>
            <person name="Chi J."/>
            <person name="Fu B."/>
            <person name="Langley E."/>
            <person name="Maguire S.F."/>
            <person name="Laird G.K."/>
            <person name="Lloyd D."/>
            <person name="Kenyon E."/>
            <person name="Donaldson S."/>
            <person name="Sehra H."/>
            <person name="Almeida-King J."/>
            <person name="Loveland J."/>
            <person name="Trevanion S."/>
            <person name="Jones M."/>
            <person name="Quail M."/>
            <person name="Willey D."/>
            <person name="Hunt A."/>
            <person name="Burton J."/>
            <person name="Sims S."/>
            <person name="McLay K."/>
            <person name="Plumb B."/>
            <person name="Davis J."/>
            <person name="Clee C."/>
            <person name="Oliver K."/>
            <person name="Clark R."/>
            <person name="Riddle C."/>
            <person name="Elliot D."/>
            <person name="Threadgold G."/>
            <person name="Harden G."/>
            <person name="Ware D."/>
            <person name="Begum S."/>
            <person name="Mortimore B."/>
            <person name="Kerry G."/>
            <person name="Heath P."/>
            <person name="Phillimore B."/>
            <person name="Tracey A."/>
            <person name="Corby N."/>
            <person name="Dunn M."/>
            <person name="Johnson C."/>
            <person name="Wood J."/>
            <person name="Clark S."/>
            <person name="Pelan S."/>
            <person name="Griffiths G."/>
            <person name="Smith M."/>
            <person name="Glithero R."/>
            <person name="Howden P."/>
            <person name="Barker N."/>
            <person name="Lloyd C."/>
            <person name="Stevens C."/>
            <person name="Harley J."/>
            <person name="Holt K."/>
            <person name="Panagiotidis G."/>
            <person name="Lovell J."/>
            <person name="Beasley H."/>
            <person name="Henderson C."/>
            <person name="Gordon D."/>
            <person name="Auger K."/>
            <person name="Wright D."/>
            <person name="Collins J."/>
            <person name="Raisen C."/>
            <person name="Dyer L."/>
            <person name="Leung K."/>
            <person name="Robertson L."/>
            <person name="Ambridge K."/>
            <person name="Leongamornlert D."/>
            <person name="McGuire S."/>
            <person name="Gilderthorp R."/>
            <person name="Griffiths C."/>
            <person name="Manthravadi D."/>
            <person name="Nichol S."/>
            <person name="Barker G."/>
            <person name="Whitehead S."/>
            <person name="Kay M."/>
            <person name="Brown J."/>
            <person name="Murnane C."/>
            <person name="Gray E."/>
            <person name="Humphries M."/>
            <person name="Sycamore N."/>
            <person name="Barker D."/>
            <person name="Saunders D."/>
            <person name="Wallis J."/>
            <person name="Babbage A."/>
            <person name="Hammond S."/>
            <person name="Mashreghi-Mohammadi M."/>
            <person name="Barr L."/>
            <person name="Martin S."/>
            <person name="Wray P."/>
            <person name="Ellington A."/>
            <person name="Matthews N."/>
            <person name="Ellwood M."/>
            <person name="Woodmansey R."/>
            <person name="Clark G."/>
            <person name="Cooper J."/>
            <person name="Tromans A."/>
            <person name="Grafham D."/>
            <person name="Skuce C."/>
            <person name="Pandian R."/>
            <person name="Andrews R."/>
            <person name="Harrison E."/>
            <person name="Kimberley A."/>
            <person name="Garnett J."/>
            <person name="Fosker N."/>
            <person name="Hall R."/>
            <person name="Garner P."/>
            <person name="Kelly D."/>
            <person name="Bird C."/>
            <person name="Palmer S."/>
            <person name="Gehring I."/>
            <person name="Berger A."/>
            <person name="Dooley C.M."/>
            <person name="Ersan-Urun Z."/>
            <person name="Eser C."/>
            <person name="Geiger H."/>
            <person name="Geisler M."/>
            <person name="Karotki L."/>
            <person name="Kirn A."/>
            <person name="Konantz J."/>
            <person name="Konantz M."/>
            <person name="Oberlander M."/>
            <person name="Rudolph-Geiger S."/>
            <person name="Teucke M."/>
            <person name="Lanz C."/>
            <person name="Raddatz G."/>
            <person name="Osoegawa K."/>
            <person name="Zhu B."/>
            <person name="Rapp A."/>
            <person name="Widaa S."/>
            <person name="Langford C."/>
            <person name="Yang F."/>
            <person name="Schuster S.C."/>
            <person name="Carter N.P."/>
            <person name="Harrow J."/>
            <person name="Ning Z."/>
            <person name="Herrero J."/>
            <person name="Searle S.M."/>
            <person name="Enright A."/>
            <person name="Geisler R."/>
            <person name="Plasterk R.H."/>
            <person name="Lee C."/>
            <person name="Westerfield M."/>
            <person name="de Jong P.J."/>
            <person name="Zon L.I."/>
            <person name="Postlethwait J.H."/>
            <person name="Nusslein-Volhard C."/>
            <person name="Hubbard T.J."/>
            <person name="Roest Crollius H."/>
            <person name="Rogers J."/>
            <person name="Stemple D.L."/>
        </authorList>
    </citation>
    <scope>NUCLEOTIDE SEQUENCE [LARGE SCALE GENOMIC DNA]</scope>
    <source>
        <strain>Tuebingen</strain>
    </source>
</reference>
<reference key="2">
    <citation type="journal article" date="2013" name="PLoS Genet.">
        <title>Loss of catalytically inactive lipid phosphatase myotubularin-related protein 12 impairs myotubularin stability and promotes centronuclear myopathy in zebrafish.</title>
        <authorList>
            <person name="Gupta V.A."/>
            <person name="Hnia K."/>
            <person name="Smith L.L."/>
            <person name="Gundry S.R."/>
            <person name="McIntire J.E."/>
            <person name="Shimazu J."/>
            <person name="Bass J.R."/>
            <person name="Talbot E.A."/>
            <person name="Amoasii L."/>
            <person name="Goldman N.E."/>
            <person name="Laporte J."/>
            <person name="Beggs A.H."/>
        </authorList>
    </citation>
    <scope>FUNCTION</scope>
    <scope>SUBUNIT</scope>
    <scope>DEVELOPMENTAL STAGE</scope>
    <scope>DISRUPTION PHENOTYPE</scope>
</reference>
<protein>
    <recommendedName>
        <fullName>Myotubularin-related protein 12</fullName>
    </recommendedName>
    <alternativeName>
        <fullName evidence="6">Inactive phosphatidylinositol 3-phosphatase 12</fullName>
    </alternativeName>
</protein>